<evidence type="ECO:0000255" key="1">
    <source>
        <dbReference type="HAMAP-Rule" id="MF_01064"/>
    </source>
</evidence>
<gene>
    <name type="ordered locus">NT01EI_0864</name>
</gene>
<sequence>MQQYSALVRRRYAEIASGDLGYIPDAIGCALKALDAVAADEQLPPAVREQAAYAAANLLVSDYVDD</sequence>
<accession>C5B7T3</accession>
<comment type="similarity">
    <text evidence="1">Belongs to the UPF0253 family.</text>
</comment>
<dbReference type="EMBL" id="CP001600">
    <property type="protein sequence ID" value="ACR68079.1"/>
    <property type="molecule type" value="Genomic_DNA"/>
</dbReference>
<dbReference type="RefSeq" id="WP_012847630.1">
    <property type="nucleotide sequence ID" value="NZ_CP169062.1"/>
</dbReference>
<dbReference type="SMR" id="C5B7T3"/>
<dbReference type="STRING" id="67780.B6E78_14900"/>
<dbReference type="KEGG" id="eic:NT01EI_0864"/>
<dbReference type="HOGENOM" id="CLU_190008_0_0_6"/>
<dbReference type="OrthoDB" id="5900992at2"/>
<dbReference type="Proteomes" id="UP000001485">
    <property type="component" value="Chromosome"/>
</dbReference>
<dbReference type="HAMAP" id="MF_01064">
    <property type="entry name" value="UPF0253"/>
    <property type="match status" value="1"/>
</dbReference>
<dbReference type="InterPro" id="IPR009624">
    <property type="entry name" value="UPF0253"/>
</dbReference>
<dbReference type="NCBIfam" id="NF003436">
    <property type="entry name" value="PRK04964.1"/>
    <property type="match status" value="1"/>
</dbReference>
<dbReference type="Pfam" id="PF06786">
    <property type="entry name" value="UPF0253"/>
    <property type="match status" value="1"/>
</dbReference>
<organism>
    <name type="scientific">Edwardsiella ictaluri (strain 93-146)</name>
    <dbReference type="NCBI Taxonomy" id="634503"/>
    <lineage>
        <taxon>Bacteria</taxon>
        <taxon>Pseudomonadati</taxon>
        <taxon>Pseudomonadota</taxon>
        <taxon>Gammaproteobacteria</taxon>
        <taxon>Enterobacterales</taxon>
        <taxon>Hafniaceae</taxon>
        <taxon>Edwardsiella</taxon>
    </lineage>
</organism>
<proteinExistence type="inferred from homology"/>
<reference key="1">
    <citation type="submission" date="2009-03" db="EMBL/GenBank/DDBJ databases">
        <title>Complete genome sequence of Edwardsiella ictaluri 93-146.</title>
        <authorList>
            <person name="Williams M.L."/>
            <person name="Gillaspy A.F."/>
            <person name="Dyer D.W."/>
            <person name="Thune R.L."/>
            <person name="Waldbieser G.C."/>
            <person name="Schuster S.C."/>
            <person name="Gipson J."/>
            <person name="Zaitshik J."/>
            <person name="Landry C."/>
            <person name="Lawrence M.L."/>
        </authorList>
    </citation>
    <scope>NUCLEOTIDE SEQUENCE [LARGE SCALE GENOMIC DNA]</scope>
    <source>
        <strain>93-146</strain>
    </source>
</reference>
<feature type="chain" id="PRO_1000213462" description="UPF0253 protein NT01EI_0864">
    <location>
        <begin position="1"/>
        <end position="66"/>
    </location>
</feature>
<protein>
    <recommendedName>
        <fullName evidence="1">UPF0253 protein NT01EI_0864</fullName>
    </recommendedName>
</protein>
<name>Y864_EDWI9</name>